<accession>Q111G4</accession>
<comment type="similarity">
    <text evidence="2">Belongs to the UPF0758 family.</text>
</comment>
<evidence type="ECO:0000255" key="1">
    <source>
        <dbReference type="PROSITE-ProRule" id="PRU01182"/>
    </source>
</evidence>
<evidence type="ECO:0000305" key="2"/>
<feature type="chain" id="PRO_1000089870" description="UPF0758 protein Tery_2667">
    <location>
        <begin position="1"/>
        <end position="243"/>
    </location>
</feature>
<feature type="domain" description="MPN" evidence="1">
    <location>
        <begin position="113"/>
        <end position="235"/>
    </location>
</feature>
<feature type="short sequence motif" description="JAMM motif" evidence="1">
    <location>
        <begin position="184"/>
        <end position="197"/>
    </location>
</feature>
<feature type="binding site" evidence="1">
    <location>
        <position position="184"/>
    </location>
    <ligand>
        <name>Zn(2+)</name>
        <dbReference type="ChEBI" id="CHEBI:29105"/>
        <note>catalytic</note>
    </ligand>
</feature>
<feature type="binding site" evidence="1">
    <location>
        <position position="186"/>
    </location>
    <ligand>
        <name>Zn(2+)</name>
        <dbReference type="ChEBI" id="CHEBI:29105"/>
        <note>catalytic</note>
    </ligand>
</feature>
<feature type="binding site" evidence="1">
    <location>
        <position position="197"/>
    </location>
    <ligand>
        <name>Zn(2+)</name>
        <dbReference type="ChEBI" id="CHEBI:29105"/>
        <note>catalytic</note>
    </ligand>
</feature>
<reference key="1">
    <citation type="journal article" date="2015" name="Proc. Natl. Acad. Sci. U.S.A.">
        <title>Trichodesmium genome maintains abundant, widespread noncoding DNA in situ, despite oligotrophic lifestyle.</title>
        <authorList>
            <person name="Walworth N."/>
            <person name="Pfreundt U."/>
            <person name="Nelson W.C."/>
            <person name="Mincer T."/>
            <person name="Heidelberg J.F."/>
            <person name="Fu F."/>
            <person name="Waterbury J.B."/>
            <person name="Glavina del Rio T."/>
            <person name="Goodwin L."/>
            <person name="Kyrpides N.C."/>
            <person name="Land M.L."/>
            <person name="Woyke T."/>
            <person name="Hutchins D.A."/>
            <person name="Hess W.R."/>
            <person name="Webb E.A."/>
        </authorList>
    </citation>
    <scope>NUCLEOTIDE SEQUENCE [LARGE SCALE GENOMIC DNA]</scope>
    <source>
        <strain>IMS101</strain>
    </source>
</reference>
<sequence>MTYSLRIADLPSNERPRERLIACGSQSLSTAELIAILLGTGQGKGKLSAVGLGQYILNQLSQYERDPLSILRNITVQELTQIHGIGTAKATTILAAIELGKRVFQSRPPELAVVESPQAAADALSQDLMWQTQEKFAVLLLDVKNRLLGTQVITIGTATETLAHPREIFGEVIRQGASRVIISHNHPSGNVEPSPEDINLTKQLLAGAQILDIPLLDHIIIGNGEHSSLRQITNLWEDYPQRG</sequence>
<gene>
    <name type="ordered locus">Tery_2667</name>
</gene>
<keyword id="KW-0378">Hydrolase</keyword>
<keyword id="KW-0479">Metal-binding</keyword>
<keyword id="KW-0482">Metalloprotease</keyword>
<keyword id="KW-0645">Protease</keyword>
<keyword id="KW-0862">Zinc</keyword>
<name>Y2667_TRIEI</name>
<organism>
    <name type="scientific">Trichodesmium erythraeum (strain IMS101)</name>
    <dbReference type="NCBI Taxonomy" id="203124"/>
    <lineage>
        <taxon>Bacteria</taxon>
        <taxon>Bacillati</taxon>
        <taxon>Cyanobacteriota</taxon>
        <taxon>Cyanophyceae</taxon>
        <taxon>Oscillatoriophycideae</taxon>
        <taxon>Oscillatoriales</taxon>
        <taxon>Microcoleaceae</taxon>
        <taxon>Trichodesmium</taxon>
    </lineage>
</organism>
<proteinExistence type="inferred from homology"/>
<protein>
    <recommendedName>
        <fullName>UPF0758 protein Tery_2667</fullName>
    </recommendedName>
</protein>
<dbReference type="EMBL" id="CP000393">
    <property type="protein sequence ID" value="ABG51860.1"/>
    <property type="molecule type" value="Genomic_DNA"/>
</dbReference>
<dbReference type="RefSeq" id="WP_011612222.1">
    <property type="nucleotide sequence ID" value="NC_008312.1"/>
</dbReference>
<dbReference type="SMR" id="Q111G4"/>
<dbReference type="STRING" id="203124.Tery_2667"/>
<dbReference type="KEGG" id="ter:Tery_2667"/>
<dbReference type="eggNOG" id="COG2003">
    <property type="taxonomic scope" value="Bacteria"/>
</dbReference>
<dbReference type="HOGENOM" id="CLU_073529_0_2_3"/>
<dbReference type="OrthoDB" id="9804482at2"/>
<dbReference type="GO" id="GO:0046872">
    <property type="term" value="F:metal ion binding"/>
    <property type="evidence" value="ECO:0007669"/>
    <property type="project" value="UniProtKB-KW"/>
</dbReference>
<dbReference type="GO" id="GO:0008237">
    <property type="term" value="F:metallopeptidase activity"/>
    <property type="evidence" value="ECO:0007669"/>
    <property type="project" value="UniProtKB-KW"/>
</dbReference>
<dbReference type="GO" id="GO:0006508">
    <property type="term" value="P:proteolysis"/>
    <property type="evidence" value="ECO:0007669"/>
    <property type="project" value="UniProtKB-KW"/>
</dbReference>
<dbReference type="CDD" id="cd08071">
    <property type="entry name" value="MPN_DUF2466"/>
    <property type="match status" value="1"/>
</dbReference>
<dbReference type="Gene3D" id="3.40.140.10">
    <property type="entry name" value="Cytidine Deaminase, domain 2"/>
    <property type="match status" value="1"/>
</dbReference>
<dbReference type="InterPro" id="IPR037518">
    <property type="entry name" value="MPN"/>
</dbReference>
<dbReference type="InterPro" id="IPR025657">
    <property type="entry name" value="RadC_JAB"/>
</dbReference>
<dbReference type="InterPro" id="IPR001405">
    <property type="entry name" value="UPF0758"/>
</dbReference>
<dbReference type="InterPro" id="IPR020891">
    <property type="entry name" value="UPF0758_CS"/>
</dbReference>
<dbReference type="InterPro" id="IPR046778">
    <property type="entry name" value="UPF0758_N"/>
</dbReference>
<dbReference type="NCBIfam" id="NF000642">
    <property type="entry name" value="PRK00024.1"/>
    <property type="match status" value="1"/>
</dbReference>
<dbReference type="NCBIfam" id="TIGR00608">
    <property type="entry name" value="radc"/>
    <property type="match status" value="1"/>
</dbReference>
<dbReference type="PANTHER" id="PTHR30471">
    <property type="entry name" value="DNA REPAIR PROTEIN RADC"/>
    <property type="match status" value="1"/>
</dbReference>
<dbReference type="PANTHER" id="PTHR30471:SF3">
    <property type="entry name" value="UPF0758 PROTEIN YEES-RELATED"/>
    <property type="match status" value="1"/>
</dbReference>
<dbReference type="Pfam" id="PF04002">
    <property type="entry name" value="RadC"/>
    <property type="match status" value="1"/>
</dbReference>
<dbReference type="Pfam" id="PF20582">
    <property type="entry name" value="UPF0758_N"/>
    <property type="match status" value="1"/>
</dbReference>
<dbReference type="PROSITE" id="PS50249">
    <property type="entry name" value="MPN"/>
    <property type="match status" value="1"/>
</dbReference>
<dbReference type="PROSITE" id="PS01302">
    <property type="entry name" value="UPF0758"/>
    <property type="match status" value="1"/>
</dbReference>